<name>LEUD_MYCUA</name>
<gene>
    <name evidence="1" type="primary">leuD</name>
    <name type="ordered locus">MUL_1969</name>
</gene>
<evidence type="ECO:0000255" key="1">
    <source>
        <dbReference type="HAMAP-Rule" id="MF_01031"/>
    </source>
</evidence>
<comment type="function">
    <text evidence="1">Catalyzes the isomerization between 2-isopropylmalate and 3-isopropylmalate, via the formation of 2-isopropylmaleate.</text>
</comment>
<comment type="catalytic activity">
    <reaction evidence="1">
        <text>(2R,3S)-3-isopropylmalate = (2S)-2-isopropylmalate</text>
        <dbReference type="Rhea" id="RHEA:32287"/>
        <dbReference type="ChEBI" id="CHEBI:1178"/>
        <dbReference type="ChEBI" id="CHEBI:35121"/>
        <dbReference type="EC" id="4.2.1.33"/>
    </reaction>
</comment>
<comment type="pathway">
    <text evidence="1">Amino-acid biosynthesis; L-leucine biosynthesis; L-leucine from 3-methyl-2-oxobutanoate: step 2/4.</text>
</comment>
<comment type="subunit">
    <text evidence="1">Heterodimer of LeuC and LeuD.</text>
</comment>
<comment type="similarity">
    <text evidence="1">Belongs to the LeuD family. LeuD type 1 subfamily.</text>
</comment>
<protein>
    <recommendedName>
        <fullName evidence="1">3-isopropylmalate dehydratase small subunit</fullName>
        <ecNumber evidence="1">4.2.1.33</ecNumber>
    </recommendedName>
    <alternativeName>
        <fullName evidence="1">Alpha-IPM isomerase</fullName>
        <shortName evidence="1">IPMI</shortName>
    </alternativeName>
    <alternativeName>
        <fullName evidence="1">Isopropylmalate isomerase</fullName>
    </alternativeName>
</protein>
<accession>A0PPZ7</accession>
<proteinExistence type="inferred from homology"/>
<sequence length="198" mass="21903">MEAFDTHTGIGVPLRRSNVDTDQIIPAVFLKRVTRTGFEDGLFASWRSDPSFVLNLSPFDRGSVLVAGPDFGTGSSREHAVWALMDYGFRVVISSRFGDIFRGNAGKAGLLAAEVDQDGVELLWKLIEQSPGLEITVNLQDRNVIAGTVVLPFRIDDHTAWRLLEGLDDIALTLRKLDEIEAYEAAYPAWKPRTLPTS</sequence>
<feature type="chain" id="PRO_1000063793" description="3-isopropylmalate dehydratase small subunit">
    <location>
        <begin position="1"/>
        <end position="198"/>
    </location>
</feature>
<organism>
    <name type="scientific">Mycobacterium ulcerans (strain Agy99)</name>
    <dbReference type="NCBI Taxonomy" id="362242"/>
    <lineage>
        <taxon>Bacteria</taxon>
        <taxon>Bacillati</taxon>
        <taxon>Actinomycetota</taxon>
        <taxon>Actinomycetes</taxon>
        <taxon>Mycobacteriales</taxon>
        <taxon>Mycobacteriaceae</taxon>
        <taxon>Mycobacterium</taxon>
        <taxon>Mycobacterium ulcerans group</taxon>
    </lineage>
</organism>
<keyword id="KW-0028">Amino-acid biosynthesis</keyword>
<keyword id="KW-0100">Branched-chain amino acid biosynthesis</keyword>
<keyword id="KW-0432">Leucine biosynthesis</keyword>
<keyword id="KW-0456">Lyase</keyword>
<dbReference type="EC" id="4.2.1.33" evidence="1"/>
<dbReference type="EMBL" id="CP000325">
    <property type="protein sequence ID" value="ABL04416.1"/>
    <property type="molecule type" value="Genomic_DNA"/>
</dbReference>
<dbReference type="RefSeq" id="WP_011740035.1">
    <property type="nucleotide sequence ID" value="NC_008611.1"/>
</dbReference>
<dbReference type="SMR" id="A0PPZ7"/>
<dbReference type="KEGG" id="mul:MUL_1969"/>
<dbReference type="eggNOG" id="COG0066">
    <property type="taxonomic scope" value="Bacteria"/>
</dbReference>
<dbReference type="HOGENOM" id="CLU_081378_0_1_11"/>
<dbReference type="UniPathway" id="UPA00048">
    <property type="reaction ID" value="UER00071"/>
</dbReference>
<dbReference type="Proteomes" id="UP000000765">
    <property type="component" value="Chromosome"/>
</dbReference>
<dbReference type="GO" id="GO:0009316">
    <property type="term" value="C:3-isopropylmalate dehydratase complex"/>
    <property type="evidence" value="ECO:0007669"/>
    <property type="project" value="InterPro"/>
</dbReference>
<dbReference type="GO" id="GO:0003861">
    <property type="term" value="F:3-isopropylmalate dehydratase activity"/>
    <property type="evidence" value="ECO:0007669"/>
    <property type="project" value="UniProtKB-UniRule"/>
</dbReference>
<dbReference type="GO" id="GO:0009098">
    <property type="term" value="P:L-leucine biosynthetic process"/>
    <property type="evidence" value="ECO:0007669"/>
    <property type="project" value="UniProtKB-UniRule"/>
</dbReference>
<dbReference type="CDD" id="cd01577">
    <property type="entry name" value="IPMI_Swivel"/>
    <property type="match status" value="1"/>
</dbReference>
<dbReference type="FunFam" id="3.20.19.10:FF:000003">
    <property type="entry name" value="3-isopropylmalate dehydratase small subunit"/>
    <property type="match status" value="1"/>
</dbReference>
<dbReference type="Gene3D" id="3.20.19.10">
    <property type="entry name" value="Aconitase, domain 4"/>
    <property type="match status" value="1"/>
</dbReference>
<dbReference type="HAMAP" id="MF_01031">
    <property type="entry name" value="LeuD_type1"/>
    <property type="match status" value="1"/>
</dbReference>
<dbReference type="InterPro" id="IPR004431">
    <property type="entry name" value="3-IsopropMal_deHydase_ssu"/>
</dbReference>
<dbReference type="InterPro" id="IPR015928">
    <property type="entry name" value="Aconitase/3IPM_dehydase_swvl"/>
</dbReference>
<dbReference type="InterPro" id="IPR000573">
    <property type="entry name" value="AconitaseA/IPMdHydase_ssu_swvl"/>
</dbReference>
<dbReference type="InterPro" id="IPR033940">
    <property type="entry name" value="IPMI_Swivel"/>
</dbReference>
<dbReference type="InterPro" id="IPR050075">
    <property type="entry name" value="LeuD"/>
</dbReference>
<dbReference type="NCBIfam" id="TIGR00171">
    <property type="entry name" value="leuD"/>
    <property type="match status" value="1"/>
</dbReference>
<dbReference type="NCBIfam" id="NF002458">
    <property type="entry name" value="PRK01641.1"/>
    <property type="match status" value="1"/>
</dbReference>
<dbReference type="PANTHER" id="PTHR43345:SF5">
    <property type="entry name" value="3-ISOPROPYLMALATE DEHYDRATASE SMALL SUBUNIT"/>
    <property type="match status" value="1"/>
</dbReference>
<dbReference type="PANTHER" id="PTHR43345">
    <property type="entry name" value="3-ISOPROPYLMALATE DEHYDRATASE SMALL SUBUNIT 2-RELATED-RELATED"/>
    <property type="match status" value="1"/>
</dbReference>
<dbReference type="Pfam" id="PF00694">
    <property type="entry name" value="Aconitase_C"/>
    <property type="match status" value="1"/>
</dbReference>
<dbReference type="SUPFAM" id="SSF52016">
    <property type="entry name" value="LeuD/IlvD-like"/>
    <property type="match status" value="1"/>
</dbReference>
<reference key="1">
    <citation type="journal article" date="2007" name="Genome Res.">
        <title>Reductive evolution and niche adaptation inferred from the genome of Mycobacterium ulcerans, the causative agent of Buruli ulcer.</title>
        <authorList>
            <person name="Stinear T.P."/>
            <person name="Seemann T."/>
            <person name="Pidot S."/>
            <person name="Frigui W."/>
            <person name="Reysset G."/>
            <person name="Garnier T."/>
            <person name="Meurice G."/>
            <person name="Simon D."/>
            <person name="Bouchier C."/>
            <person name="Ma L."/>
            <person name="Tichit M."/>
            <person name="Porter J.L."/>
            <person name="Ryan J."/>
            <person name="Johnson P.D.R."/>
            <person name="Davies J.K."/>
            <person name="Jenkin G.A."/>
            <person name="Small P.L.C."/>
            <person name="Jones L.M."/>
            <person name="Tekaia F."/>
            <person name="Laval F."/>
            <person name="Daffe M."/>
            <person name="Parkhill J."/>
            <person name="Cole S.T."/>
        </authorList>
    </citation>
    <scope>NUCLEOTIDE SEQUENCE [LARGE SCALE GENOMIC DNA]</scope>
    <source>
        <strain>Agy99</strain>
    </source>
</reference>